<evidence type="ECO:0000255" key="1">
    <source>
        <dbReference type="HAMAP-Rule" id="MF_00819"/>
    </source>
</evidence>
<sequence>MKVTDVRLRKIQTDGRMKALVSITLDEAFVIHDLRVIEGNSGLFVAMPSKRTPDGEFRDIAHPINSDMRQEIQDAVMKVYDETDEVVPDKNATSEDSEEA</sequence>
<protein>
    <recommendedName>
        <fullName evidence="1">Putative septation protein SpoVG</fullName>
    </recommendedName>
</protein>
<name>SP5G_STAAW</name>
<accession>Q8NXZ8</accession>
<gene>
    <name evidence="1" type="primary">spoVG</name>
    <name type="ordered locus">MW0453</name>
</gene>
<organism>
    <name type="scientific">Staphylococcus aureus (strain MW2)</name>
    <dbReference type="NCBI Taxonomy" id="196620"/>
    <lineage>
        <taxon>Bacteria</taxon>
        <taxon>Bacillati</taxon>
        <taxon>Bacillota</taxon>
        <taxon>Bacilli</taxon>
        <taxon>Bacillales</taxon>
        <taxon>Staphylococcaceae</taxon>
        <taxon>Staphylococcus</taxon>
    </lineage>
</organism>
<dbReference type="EMBL" id="BA000033">
    <property type="protein sequence ID" value="BAB94318.1"/>
    <property type="molecule type" value="Genomic_DNA"/>
</dbReference>
<dbReference type="RefSeq" id="WP_000868999.1">
    <property type="nucleotide sequence ID" value="NC_003923.1"/>
</dbReference>
<dbReference type="SMR" id="Q8NXZ8"/>
<dbReference type="KEGG" id="sam:MW0453"/>
<dbReference type="HOGENOM" id="CLU_103669_2_1_9"/>
<dbReference type="GO" id="GO:0000917">
    <property type="term" value="P:division septum assembly"/>
    <property type="evidence" value="ECO:0007669"/>
    <property type="project" value="UniProtKB-KW"/>
</dbReference>
<dbReference type="GO" id="GO:0030435">
    <property type="term" value="P:sporulation resulting in formation of a cellular spore"/>
    <property type="evidence" value="ECO:0007669"/>
    <property type="project" value="InterPro"/>
</dbReference>
<dbReference type="Gene3D" id="3.30.1120.40">
    <property type="entry name" value="Stage V sporulation protein G"/>
    <property type="match status" value="1"/>
</dbReference>
<dbReference type="HAMAP" id="MF_00819">
    <property type="entry name" value="SpoVG"/>
    <property type="match status" value="1"/>
</dbReference>
<dbReference type="InterPro" id="IPR007170">
    <property type="entry name" value="SpoVG"/>
</dbReference>
<dbReference type="InterPro" id="IPR036751">
    <property type="entry name" value="SpoVG_sf"/>
</dbReference>
<dbReference type="NCBIfam" id="NF009749">
    <property type="entry name" value="PRK13259.1"/>
    <property type="match status" value="1"/>
</dbReference>
<dbReference type="PANTHER" id="PTHR38429">
    <property type="entry name" value="SEPTATION PROTEIN SPOVG-RELATED"/>
    <property type="match status" value="1"/>
</dbReference>
<dbReference type="PANTHER" id="PTHR38429:SF1">
    <property type="entry name" value="SEPTATION PROTEIN SPOVG-RELATED"/>
    <property type="match status" value="1"/>
</dbReference>
<dbReference type="Pfam" id="PF04026">
    <property type="entry name" value="SpoVG"/>
    <property type="match status" value="1"/>
</dbReference>
<dbReference type="SUPFAM" id="SSF160537">
    <property type="entry name" value="SpoVG-like"/>
    <property type="match status" value="1"/>
</dbReference>
<keyword id="KW-0131">Cell cycle</keyword>
<keyword id="KW-0132">Cell division</keyword>
<keyword id="KW-0717">Septation</keyword>
<reference key="1">
    <citation type="journal article" date="2002" name="Lancet">
        <title>Genome and virulence determinants of high virulence community-acquired MRSA.</title>
        <authorList>
            <person name="Baba T."/>
            <person name="Takeuchi F."/>
            <person name="Kuroda M."/>
            <person name="Yuzawa H."/>
            <person name="Aoki K."/>
            <person name="Oguchi A."/>
            <person name="Nagai Y."/>
            <person name="Iwama N."/>
            <person name="Asano K."/>
            <person name="Naimi T."/>
            <person name="Kuroda H."/>
            <person name="Cui L."/>
            <person name="Yamamoto K."/>
            <person name="Hiramatsu K."/>
        </authorList>
    </citation>
    <scope>NUCLEOTIDE SEQUENCE [LARGE SCALE GENOMIC DNA]</scope>
    <source>
        <strain>MW2</strain>
    </source>
</reference>
<comment type="function">
    <text evidence="1">Could be involved in septation.</text>
</comment>
<comment type="similarity">
    <text evidence="1">Belongs to the SpoVG family.</text>
</comment>
<proteinExistence type="inferred from homology"/>
<feature type="chain" id="PRO_0000157209" description="Putative septation protein SpoVG">
    <location>
        <begin position="1"/>
        <end position="100"/>
    </location>
</feature>